<gene>
    <name evidence="1" type="primary">lpxK</name>
    <name type="ordered locus">A2cp1_2794</name>
</gene>
<dbReference type="EC" id="2.7.1.130" evidence="1"/>
<dbReference type="EMBL" id="CP001359">
    <property type="protein sequence ID" value="ACL66131.1"/>
    <property type="molecule type" value="Genomic_DNA"/>
</dbReference>
<dbReference type="RefSeq" id="WP_012633890.1">
    <property type="nucleotide sequence ID" value="NC_011891.1"/>
</dbReference>
<dbReference type="SMR" id="B8JE66"/>
<dbReference type="KEGG" id="acp:A2cp1_2794"/>
<dbReference type="HOGENOM" id="CLU_038816_6_0_7"/>
<dbReference type="UniPathway" id="UPA00359">
    <property type="reaction ID" value="UER00482"/>
</dbReference>
<dbReference type="Proteomes" id="UP000007089">
    <property type="component" value="Chromosome"/>
</dbReference>
<dbReference type="GO" id="GO:0005886">
    <property type="term" value="C:plasma membrane"/>
    <property type="evidence" value="ECO:0007669"/>
    <property type="project" value="TreeGrafter"/>
</dbReference>
<dbReference type="GO" id="GO:0005524">
    <property type="term" value="F:ATP binding"/>
    <property type="evidence" value="ECO:0007669"/>
    <property type="project" value="UniProtKB-UniRule"/>
</dbReference>
<dbReference type="GO" id="GO:0009029">
    <property type="term" value="F:tetraacyldisaccharide 4'-kinase activity"/>
    <property type="evidence" value="ECO:0007669"/>
    <property type="project" value="UniProtKB-UniRule"/>
</dbReference>
<dbReference type="GO" id="GO:0009245">
    <property type="term" value="P:lipid A biosynthetic process"/>
    <property type="evidence" value="ECO:0007669"/>
    <property type="project" value="UniProtKB-UniRule"/>
</dbReference>
<dbReference type="GO" id="GO:0009244">
    <property type="term" value="P:lipopolysaccharide core region biosynthetic process"/>
    <property type="evidence" value="ECO:0007669"/>
    <property type="project" value="TreeGrafter"/>
</dbReference>
<dbReference type="Gene3D" id="3.40.50.300">
    <property type="entry name" value="P-loop containing nucleotide triphosphate hydrolases"/>
    <property type="match status" value="1"/>
</dbReference>
<dbReference type="HAMAP" id="MF_00409">
    <property type="entry name" value="LpxK"/>
    <property type="match status" value="1"/>
</dbReference>
<dbReference type="InterPro" id="IPR003758">
    <property type="entry name" value="LpxK"/>
</dbReference>
<dbReference type="InterPro" id="IPR027417">
    <property type="entry name" value="P-loop_NTPase"/>
</dbReference>
<dbReference type="NCBIfam" id="TIGR00682">
    <property type="entry name" value="lpxK"/>
    <property type="match status" value="1"/>
</dbReference>
<dbReference type="PANTHER" id="PTHR42724">
    <property type="entry name" value="TETRAACYLDISACCHARIDE 4'-KINASE"/>
    <property type="match status" value="1"/>
</dbReference>
<dbReference type="PANTHER" id="PTHR42724:SF1">
    <property type="entry name" value="TETRAACYLDISACCHARIDE 4'-KINASE, MITOCHONDRIAL-RELATED"/>
    <property type="match status" value="1"/>
</dbReference>
<dbReference type="Pfam" id="PF02606">
    <property type="entry name" value="LpxK"/>
    <property type="match status" value="1"/>
</dbReference>
<dbReference type="SUPFAM" id="SSF52540">
    <property type="entry name" value="P-loop containing nucleoside triphosphate hydrolases"/>
    <property type="match status" value="1"/>
</dbReference>
<organism>
    <name type="scientific">Anaeromyxobacter dehalogenans (strain 2CP-1 / ATCC BAA-258)</name>
    <dbReference type="NCBI Taxonomy" id="455488"/>
    <lineage>
        <taxon>Bacteria</taxon>
        <taxon>Pseudomonadati</taxon>
        <taxon>Myxococcota</taxon>
        <taxon>Myxococcia</taxon>
        <taxon>Myxococcales</taxon>
        <taxon>Cystobacterineae</taxon>
        <taxon>Anaeromyxobacteraceae</taxon>
        <taxon>Anaeromyxobacter</taxon>
    </lineage>
</organism>
<name>LPXK_ANAD2</name>
<comment type="function">
    <text evidence="1">Transfers the gamma-phosphate of ATP to the 4'-position of a tetraacyldisaccharide 1-phosphate intermediate (termed DS-1-P) to form tetraacyldisaccharide 1,4'-bis-phosphate (lipid IVA).</text>
</comment>
<comment type="catalytic activity">
    <reaction evidence="1">
        <text>a lipid A disaccharide + ATP = a lipid IVA + ADP + H(+)</text>
        <dbReference type="Rhea" id="RHEA:67840"/>
        <dbReference type="ChEBI" id="CHEBI:15378"/>
        <dbReference type="ChEBI" id="CHEBI:30616"/>
        <dbReference type="ChEBI" id="CHEBI:176343"/>
        <dbReference type="ChEBI" id="CHEBI:176425"/>
        <dbReference type="ChEBI" id="CHEBI:456216"/>
        <dbReference type="EC" id="2.7.1.130"/>
    </reaction>
</comment>
<comment type="pathway">
    <text evidence="1">Glycolipid biosynthesis; lipid IV(A) biosynthesis; lipid IV(A) from (3R)-3-hydroxytetradecanoyl-[acyl-carrier-protein] and UDP-N-acetyl-alpha-D-glucosamine: step 6/6.</text>
</comment>
<comment type="similarity">
    <text evidence="1">Belongs to the LpxK family.</text>
</comment>
<keyword id="KW-0067">ATP-binding</keyword>
<keyword id="KW-0418">Kinase</keyword>
<keyword id="KW-0441">Lipid A biosynthesis</keyword>
<keyword id="KW-0444">Lipid biosynthesis</keyword>
<keyword id="KW-0443">Lipid metabolism</keyword>
<keyword id="KW-0547">Nucleotide-binding</keyword>
<keyword id="KW-0808">Transferase</keyword>
<reference key="1">
    <citation type="submission" date="2009-01" db="EMBL/GenBank/DDBJ databases">
        <title>Complete sequence of Anaeromyxobacter dehalogenans 2CP-1.</title>
        <authorList>
            <person name="Lucas S."/>
            <person name="Copeland A."/>
            <person name="Lapidus A."/>
            <person name="Glavina del Rio T."/>
            <person name="Dalin E."/>
            <person name="Tice H."/>
            <person name="Bruce D."/>
            <person name="Goodwin L."/>
            <person name="Pitluck S."/>
            <person name="Saunders E."/>
            <person name="Brettin T."/>
            <person name="Detter J.C."/>
            <person name="Han C."/>
            <person name="Larimer F."/>
            <person name="Land M."/>
            <person name="Hauser L."/>
            <person name="Kyrpides N."/>
            <person name="Ovchinnikova G."/>
            <person name="Beliaev A.S."/>
            <person name="Richardson P."/>
        </authorList>
    </citation>
    <scope>NUCLEOTIDE SEQUENCE [LARGE SCALE GENOMIC DNA]</scope>
    <source>
        <strain>2CP-1 / ATCC BAA-258</strain>
    </source>
</reference>
<feature type="chain" id="PRO_1000134734" description="Tetraacyldisaccharide 4'-kinase">
    <location>
        <begin position="1"/>
        <end position="379"/>
    </location>
</feature>
<feature type="binding site" evidence="1">
    <location>
        <begin position="63"/>
        <end position="70"/>
    </location>
    <ligand>
        <name>ATP</name>
        <dbReference type="ChEBI" id="CHEBI:30616"/>
    </ligand>
</feature>
<accession>B8JE66</accession>
<sequence>MSGLEAIWWRERPGPLGALAGAPLLLAEAPFRAAAALRGALYDRGVLPAVRAGAPVVSIGNLAVGGAGKTPAALAVAARLAGRGRRVAILSRGYGAARADARVASDGAGALLPAAEAGDEPALLARRLPGVAVLCGPRRAELARTAVEALGADALVLDDGFQHRALARDLDVVVLDASNPFGNGHLLPRGPNREPRTALRRAGLVWLSHADRAAPERLEALRALARDATGRAPVESRHAATALLDGALREAGSLEALRGRRVAALSGLARPAGFLRTLEALGAEVALARAFPDHHRFTAGELEAVLRDGDAAGCAWVVTTEKDAVRLDPALAAGAAGRLRVVRVDAELLRGADVLEAALDAALAAAAPQPRPAPRAPVS</sequence>
<protein>
    <recommendedName>
        <fullName evidence="1">Tetraacyldisaccharide 4'-kinase</fullName>
        <ecNumber evidence="1">2.7.1.130</ecNumber>
    </recommendedName>
    <alternativeName>
        <fullName evidence="1">Lipid A 4'-kinase</fullName>
    </alternativeName>
</protein>
<proteinExistence type="inferred from homology"/>
<evidence type="ECO:0000255" key="1">
    <source>
        <dbReference type="HAMAP-Rule" id="MF_00409"/>
    </source>
</evidence>